<sequence length="129" mass="14269">METQNAKAIARKISIAPRKARLVVDLIRGKNIAQAQAILTFTPKVAAPVILKLLNSAVSNAVNNLKLNREQLYVKEVFVNEGLRLKRMFPRAKGSGDMIKKRTSHITLVITSSTNLQTSKEEEQSGSKN</sequence>
<reference key="1">
    <citation type="journal article" date="2004" name="Nat. Genet.">
        <title>Reductive evolution suggested from the complete genome sequence of a plant-pathogenic phytoplasma.</title>
        <authorList>
            <person name="Oshima K."/>
            <person name="Kakizawa S."/>
            <person name="Nishigawa H."/>
            <person name="Jung H.-Y."/>
            <person name="Wei W."/>
            <person name="Suzuki S."/>
            <person name="Arashida R."/>
            <person name="Nakata D."/>
            <person name="Miyata S."/>
            <person name="Ugaki M."/>
            <person name="Namba S."/>
        </authorList>
    </citation>
    <scope>NUCLEOTIDE SEQUENCE [LARGE SCALE GENOMIC DNA]</scope>
    <source>
        <strain>OY-M</strain>
    </source>
</reference>
<accession>Q6YR16</accession>
<keyword id="KW-0687">Ribonucleoprotein</keyword>
<keyword id="KW-0689">Ribosomal protein</keyword>
<keyword id="KW-0694">RNA-binding</keyword>
<keyword id="KW-0699">rRNA-binding</keyword>
<feature type="chain" id="PRO_0000125192" description="Large ribosomal subunit protein uL22">
    <location>
        <begin position="1"/>
        <end position="129"/>
    </location>
</feature>
<protein>
    <recommendedName>
        <fullName evidence="1">Large ribosomal subunit protein uL22</fullName>
    </recommendedName>
    <alternativeName>
        <fullName evidence="2">50S ribosomal protein L22</fullName>
    </alternativeName>
</protein>
<organism>
    <name type="scientific">Onion yellows phytoplasma (strain OY-M)</name>
    <dbReference type="NCBI Taxonomy" id="262768"/>
    <lineage>
        <taxon>Bacteria</taxon>
        <taxon>Bacillati</taxon>
        <taxon>Mycoplasmatota</taxon>
        <taxon>Mollicutes</taxon>
        <taxon>Acholeplasmatales</taxon>
        <taxon>Acholeplasmataceae</taxon>
        <taxon>Candidatus Phytoplasma</taxon>
        <taxon>16SrI (Aster yellows group)</taxon>
    </lineage>
</organism>
<gene>
    <name evidence="1" type="primary">rplV</name>
    <name type="ordered locus">PAM_205</name>
</gene>
<name>RL22_ONYPE</name>
<dbReference type="EMBL" id="AP006628">
    <property type="protein sequence ID" value="BAD04290.1"/>
    <property type="molecule type" value="Genomic_DNA"/>
</dbReference>
<dbReference type="SMR" id="Q6YR16"/>
<dbReference type="STRING" id="262768.PAM_205"/>
<dbReference type="KEGG" id="poy:PAM_205"/>
<dbReference type="eggNOG" id="COG0091">
    <property type="taxonomic scope" value="Bacteria"/>
</dbReference>
<dbReference type="HOGENOM" id="CLU_083987_3_3_14"/>
<dbReference type="BioCyc" id="OYEL262768:G1G26-251-MONOMER"/>
<dbReference type="Proteomes" id="UP000002523">
    <property type="component" value="Chromosome"/>
</dbReference>
<dbReference type="GO" id="GO:0022625">
    <property type="term" value="C:cytosolic large ribosomal subunit"/>
    <property type="evidence" value="ECO:0007669"/>
    <property type="project" value="TreeGrafter"/>
</dbReference>
<dbReference type="GO" id="GO:0019843">
    <property type="term" value="F:rRNA binding"/>
    <property type="evidence" value="ECO:0007669"/>
    <property type="project" value="UniProtKB-UniRule"/>
</dbReference>
<dbReference type="GO" id="GO:0003735">
    <property type="term" value="F:structural constituent of ribosome"/>
    <property type="evidence" value="ECO:0007669"/>
    <property type="project" value="InterPro"/>
</dbReference>
<dbReference type="GO" id="GO:0006412">
    <property type="term" value="P:translation"/>
    <property type="evidence" value="ECO:0007669"/>
    <property type="project" value="UniProtKB-UniRule"/>
</dbReference>
<dbReference type="CDD" id="cd00336">
    <property type="entry name" value="Ribosomal_L22"/>
    <property type="match status" value="1"/>
</dbReference>
<dbReference type="Gene3D" id="3.90.470.10">
    <property type="entry name" value="Ribosomal protein L22/L17"/>
    <property type="match status" value="1"/>
</dbReference>
<dbReference type="HAMAP" id="MF_01331_B">
    <property type="entry name" value="Ribosomal_uL22_B"/>
    <property type="match status" value="1"/>
</dbReference>
<dbReference type="InterPro" id="IPR001063">
    <property type="entry name" value="Ribosomal_uL22"/>
</dbReference>
<dbReference type="InterPro" id="IPR005727">
    <property type="entry name" value="Ribosomal_uL22_bac/chlpt-type"/>
</dbReference>
<dbReference type="InterPro" id="IPR047867">
    <property type="entry name" value="Ribosomal_uL22_bac/org-type"/>
</dbReference>
<dbReference type="InterPro" id="IPR018260">
    <property type="entry name" value="Ribosomal_uL22_CS"/>
</dbReference>
<dbReference type="InterPro" id="IPR036394">
    <property type="entry name" value="Ribosomal_uL22_sf"/>
</dbReference>
<dbReference type="NCBIfam" id="TIGR01044">
    <property type="entry name" value="rplV_bact"/>
    <property type="match status" value="1"/>
</dbReference>
<dbReference type="PANTHER" id="PTHR13501">
    <property type="entry name" value="CHLOROPLAST 50S RIBOSOMAL PROTEIN L22-RELATED"/>
    <property type="match status" value="1"/>
</dbReference>
<dbReference type="PANTHER" id="PTHR13501:SF8">
    <property type="entry name" value="LARGE RIBOSOMAL SUBUNIT PROTEIN UL22M"/>
    <property type="match status" value="1"/>
</dbReference>
<dbReference type="Pfam" id="PF00237">
    <property type="entry name" value="Ribosomal_L22"/>
    <property type="match status" value="1"/>
</dbReference>
<dbReference type="SUPFAM" id="SSF54843">
    <property type="entry name" value="Ribosomal protein L22"/>
    <property type="match status" value="1"/>
</dbReference>
<dbReference type="PROSITE" id="PS00464">
    <property type="entry name" value="RIBOSOMAL_L22"/>
    <property type="match status" value="1"/>
</dbReference>
<proteinExistence type="inferred from homology"/>
<comment type="function">
    <text evidence="1">This protein binds specifically to 23S rRNA; its binding is stimulated by other ribosomal proteins, e.g. L4, L17, and L20. It is important during the early stages of 50S assembly. It makes multiple contacts with different domains of the 23S rRNA in the assembled 50S subunit and ribosome (By similarity).</text>
</comment>
<comment type="function">
    <text evidence="1">The globular domain of the protein is located near the polypeptide exit tunnel on the outside of the subunit, while an extended beta-hairpin is found that lines the wall of the exit tunnel in the center of the 70S ribosome.</text>
</comment>
<comment type="subunit">
    <text evidence="1">Part of the 50S ribosomal subunit.</text>
</comment>
<comment type="similarity">
    <text evidence="1">Belongs to the universal ribosomal protein uL22 family.</text>
</comment>
<evidence type="ECO:0000255" key="1">
    <source>
        <dbReference type="HAMAP-Rule" id="MF_01331"/>
    </source>
</evidence>
<evidence type="ECO:0000305" key="2"/>